<keyword id="KW-0325">Glycoprotein</keyword>
<keyword id="KW-0333">Golgi apparatus</keyword>
<keyword id="KW-0472">Membrane</keyword>
<keyword id="KW-0653">Protein transport</keyword>
<keyword id="KW-0675">Receptor</keyword>
<keyword id="KW-0677">Repeat</keyword>
<keyword id="KW-0732">Signal</keyword>
<keyword id="KW-0812">Transmembrane</keyword>
<keyword id="KW-1133">Transmembrane helix</keyword>
<keyword id="KW-0813">Transport</keyword>
<gene>
    <name type="primary">vps10</name>
    <name type="ORF">AFLA_122640</name>
</gene>
<comment type="function">
    <text evidence="1">Functions as a sorting receptor in the Golgi compartment required for the intracellular sorting and delivery of soluble vacuolar proteins, like carboxypeptidase Y (CPY) and proteinase A. Executes multiple rounds of sorting by cycling between the late Golgi and a prevacuolar endosome-like compartment (By similarity).</text>
</comment>
<comment type="subcellular location">
    <subcellularLocation>
        <location evidence="1">Golgi apparatus</location>
        <location evidence="1">trans-Golgi network membrane</location>
        <topology evidence="1">Multi-pass membrane protein</topology>
    </subcellularLocation>
    <subcellularLocation>
        <location evidence="1">Prevacuolar compartment membrane</location>
        <topology evidence="1">Multi-pass membrane protein</topology>
    </subcellularLocation>
    <text evidence="1">Cycles between the Golgi apparatus and the prevacuolar compartment.</text>
</comment>
<comment type="similarity">
    <text evidence="3">Belongs to the VPS10-related sortilin family.</text>
</comment>
<dbReference type="EMBL" id="EQ963485">
    <property type="protein sequence ID" value="EED46034.1"/>
    <property type="molecule type" value="Genomic_DNA"/>
</dbReference>
<dbReference type="RefSeq" id="XP_002384970.1">
    <property type="nucleotide sequence ID" value="XM_002384929.1"/>
</dbReference>
<dbReference type="SMR" id="B8NX76"/>
<dbReference type="STRING" id="332952.B8NX76"/>
<dbReference type="GlyCosmos" id="B8NX76">
    <property type="glycosylation" value="6 sites, No reported glycans"/>
</dbReference>
<dbReference type="EnsemblFungi" id="EED46034">
    <property type="protein sequence ID" value="EED46034"/>
    <property type="gene ID" value="AFLA_122640"/>
</dbReference>
<dbReference type="VEuPathDB" id="FungiDB:AFLA_014272"/>
<dbReference type="eggNOG" id="KOG3511">
    <property type="taxonomic scope" value="Eukaryota"/>
</dbReference>
<dbReference type="HOGENOM" id="CLU_000700_0_0_1"/>
<dbReference type="OMA" id="ATMSEFI"/>
<dbReference type="GO" id="GO:0005829">
    <property type="term" value="C:cytosol"/>
    <property type="evidence" value="ECO:0007669"/>
    <property type="project" value="GOC"/>
</dbReference>
<dbReference type="GO" id="GO:0005794">
    <property type="term" value="C:Golgi apparatus"/>
    <property type="evidence" value="ECO:0007669"/>
    <property type="project" value="UniProtKB-SubCell"/>
</dbReference>
<dbReference type="GO" id="GO:0016020">
    <property type="term" value="C:membrane"/>
    <property type="evidence" value="ECO:0007669"/>
    <property type="project" value="UniProtKB-KW"/>
</dbReference>
<dbReference type="GO" id="GO:0006895">
    <property type="term" value="P:Golgi to endosome transport"/>
    <property type="evidence" value="ECO:0007669"/>
    <property type="project" value="TreeGrafter"/>
</dbReference>
<dbReference type="GO" id="GO:0006896">
    <property type="term" value="P:Golgi to vacuole transport"/>
    <property type="evidence" value="ECO:0007669"/>
    <property type="project" value="TreeGrafter"/>
</dbReference>
<dbReference type="GO" id="GO:0006623">
    <property type="term" value="P:protein targeting to vacuole"/>
    <property type="evidence" value="ECO:0007669"/>
    <property type="project" value="TreeGrafter"/>
</dbReference>
<dbReference type="CDD" id="cd15482">
    <property type="entry name" value="Sialidase_non-viral"/>
    <property type="match status" value="1"/>
</dbReference>
<dbReference type="FunFam" id="2.10.70.80:FF:000006">
    <property type="entry name" value="Sortilin"/>
    <property type="match status" value="1"/>
</dbReference>
<dbReference type="FunFam" id="2.130.10.10:FF:000676">
    <property type="entry name" value="Sortilin"/>
    <property type="match status" value="1"/>
</dbReference>
<dbReference type="FunFam" id="2.130.10.10:FF:001538">
    <property type="entry name" value="Sortilin"/>
    <property type="match status" value="1"/>
</dbReference>
<dbReference type="FunFam" id="3.30.60.270:FF:000005">
    <property type="entry name" value="Sortilin"/>
    <property type="match status" value="2"/>
</dbReference>
<dbReference type="FunFam" id="2.10.70.80:FF:000001">
    <property type="entry name" value="Sortilin-related VPS10 domain-containing receptor 1"/>
    <property type="match status" value="1"/>
</dbReference>
<dbReference type="Gene3D" id="2.10.70.80">
    <property type="match status" value="2"/>
</dbReference>
<dbReference type="Gene3D" id="3.30.60.270">
    <property type="match status" value="2"/>
</dbReference>
<dbReference type="Gene3D" id="2.130.10.10">
    <property type="entry name" value="YVTN repeat-like/Quinoprotein amine dehydrogenase"/>
    <property type="match status" value="3"/>
</dbReference>
<dbReference type="InterPro" id="IPR036278">
    <property type="entry name" value="Sialidase_sf"/>
</dbReference>
<dbReference type="InterPro" id="IPR031777">
    <property type="entry name" value="Sortilin_C"/>
</dbReference>
<dbReference type="InterPro" id="IPR031778">
    <property type="entry name" value="Sortilin_N"/>
</dbReference>
<dbReference type="InterPro" id="IPR006581">
    <property type="entry name" value="VPS10"/>
</dbReference>
<dbReference type="InterPro" id="IPR050310">
    <property type="entry name" value="VPS10-sortilin"/>
</dbReference>
<dbReference type="InterPro" id="IPR015943">
    <property type="entry name" value="WD40/YVTN_repeat-like_dom_sf"/>
</dbReference>
<dbReference type="PANTHER" id="PTHR12106">
    <property type="entry name" value="SORTILIN RELATED"/>
    <property type="match status" value="1"/>
</dbReference>
<dbReference type="PANTHER" id="PTHR12106:SF27">
    <property type="entry name" value="SORTILIN-RELATED RECEPTOR"/>
    <property type="match status" value="1"/>
</dbReference>
<dbReference type="Pfam" id="PF15902">
    <property type="entry name" value="Sortilin-Vps10"/>
    <property type="match status" value="2"/>
</dbReference>
<dbReference type="Pfam" id="PF15901">
    <property type="entry name" value="Sortilin_C"/>
    <property type="match status" value="2"/>
</dbReference>
<dbReference type="SMART" id="SM00602">
    <property type="entry name" value="VPS10"/>
    <property type="match status" value="2"/>
</dbReference>
<dbReference type="SUPFAM" id="SSF110296">
    <property type="entry name" value="Oligoxyloglucan reducing end-specific cellobiohydrolase"/>
    <property type="match status" value="2"/>
</dbReference>
<dbReference type="SUPFAM" id="SSF50939">
    <property type="entry name" value="Sialidases"/>
    <property type="match status" value="1"/>
</dbReference>
<protein>
    <recommendedName>
        <fullName>Vacuolar protein sorting/targeting protein 10</fullName>
    </recommendedName>
    <alternativeName>
        <fullName>Carboxypeptidase Y receptor</fullName>
        <shortName>CPY receptor</shortName>
    </alternativeName>
    <alternativeName>
        <fullName>Sortilin vps10</fullName>
    </alternativeName>
    <alternativeName>
        <fullName>Vacuolar carboxypeptidase sorting receptor vps10</fullName>
    </alternativeName>
</protein>
<organism>
    <name type="scientific">Aspergillus flavus (strain ATCC 200026 / FGSC A1120 / IAM 13836 / NRRL 3357 / JCM 12722 / SRRC 167)</name>
    <dbReference type="NCBI Taxonomy" id="332952"/>
    <lineage>
        <taxon>Eukaryota</taxon>
        <taxon>Fungi</taxon>
        <taxon>Dikarya</taxon>
        <taxon>Ascomycota</taxon>
        <taxon>Pezizomycotina</taxon>
        <taxon>Eurotiomycetes</taxon>
        <taxon>Eurotiomycetidae</taxon>
        <taxon>Eurotiales</taxon>
        <taxon>Aspergillaceae</taxon>
        <taxon>Aspergillus</taxon>
        <taxon>Aspergillus subgen. Circumdati</taxon>
    </lineage>
</organism>
<evidence type="ECO:0000250" key="1"/>
<evidence type="ECO:0000255" key="2"/>
<evidence type="ECO:0000305" key="3"/>
<name>VPS10_ASPFN</name>
<sequence>MIYRWLLLVSCLLLALLAQRGAAKSSSPKIAPPTKIDHKPSSLFYFEDTDTVLMNTVNGDLLRSVDAGETWSVVEGDDGGMKHHVLLIRQHPYDNKKAYALGPNGRHWVTTDQAKTWASFNIAEFPAIRHYPLVFHGGDSSKVIFQGEECAGRYCIVRSYYTTDDFATVKLLRESTGGCAWAVGHPQFAEDLNLAEEIKDRSFCVVPGLKVPLPHANRLVYSDDYFRGNAEGTETKLQEGRPVSGVISTAAVKKFIVAAAKSKGTEELALYVTVDAKNWHRAEFDGHRIEEDAYTMLESTNYSLQVDVLTSPRSGMGVLFTSNSNGTYFTRNIEHTNRNSEGMVDFEKIAGIQGIVLVNTVQNPEEVESGSAKKKITSRISFDDGRTFQPLKSDGENLHLHSVTALRNIGRVFSSPAPGLVMGIGNTGNHLQEYAECNLYISDDAGVTWRRAIKHPHKYEFGDQGAVVIAVRDEGRVDKINYSLDHGKEWASVELQHKIYPTMVTTTPDSTSLKFIVVGSLKESQDGEHVIYSIDFDGLHERKCEEDDFEKWPARLDEHGKPDCLMGHKQFYMRRRANANCFVDEEFKDPQPIFEACKCTAEDFECEYRRTEDGKGCVIPSPLTPPEGECKKPDDKFMGPSGWRLIPGDACIRDGGENLDKEIERSCKDASSPSTDGKIRVTLQLLEARDYAQYYYLERQSSSSGSDETIIMLSSEHEVYVTHDHGKTWERPLKGEEITRVYLHPYSSDVAFLLTDGKEGFWTEDRGHTFKPFQAPAPPTQDRFLQVMAFHPVHKDRLIWTGAVDCHSGDCHSDAFIKKGRGKNWEPLLSYVQKCEFESRETRPNSTNLVYCEQFEKQSKNGRLQLLSSDDFFNDNEVQFVDVINYATMSEFIIVASRQPENPDSLVASTSVDGRTFARAQFPPNVQVPVQTAYTVLESSTHAVFLHVTASSTEGGEYGPIIKSNSNGTSYVLSISAVNRNSLGYVDFEKAQGLEGVAVVNVVSNVADVSKKVPKKLKTMITHNDGAQWMLLPPPTKDADGKSFGCSVVAGKGTDDCSLHLHGYTERKDERDTFASGSAIGLMMAVGNVGDHLAGGDEADTFITNDGGISWKSVKKGKYMWEYGDSGSVIVIVPESKPTKTIHYSLDEGDTWEEFQFSDVEVRINDISTVPSDTSKNFLLWARLSNSEVQDKFATFNIDFSGVRPRPCLLDENQGNSDDYYIWEPKHPFQENNCLFGHSEQYHRKKPSAQCWNDWRESHVHSIGTNCTCTRADYECDYNYEPQSDGSCALVPGLPKPDAMEICKKDPDTIEYWEPTGYRRIPQTTCQGGLNLDHFVSKPCPNKEEEYKQKHGISGVGLFFAIVTPLAVAGAAGYYAYSKWDGKFGQIRLGESAGTSQSFLSRDSWLVTVPIAIVAGTVAVARALPLLVTSLWRGASGFIRLGRGRGYSRPYASRGSFAARRGDYTSIVDDEDELLGVEDAELDEDDEA</sequence>
<reference key="1">
    <citation type="journal article" date="2015" name="Genome Announc.">
        <title>Genome sequence of Aspergillus flavus NRRL 3357, a strain that causes aflatoxin contamination of food and feed.</title>
        <authorList>
            <person name="Nierman W.C."/>
            <person name="Yu J."/>
            <person name="Fedorova-Abrams N.D."/>
            <person name="Losada L."/>
            <person name="Cleveland T.E."/>
            <person name="Bhatnagar D."/>
            <person name="Bennett J.W."/>
            <person name="Dean R."/>
            <person name="Payne G.A."/>
        </authorList>
    </citation>
    <scope>NUCLEOTIDE SEQUENCE [LARGE SCALE GENOMIC DNA]</scope>
    <source>
        <strain>ATCC 200026 / FGSC A1120 / IAM 13836 / NRRL 3357 / JCM 12722 / SRRC 167</strain>
    </source>
</reference>
<proteinExistence type="inferred from homology"/>
<feature type="signal peptide" evidence="2">
    <location>
        <begin position="1"/>
        <end position="23"/>
    </location>
</feature>
<feature type="chain" id="PRO_0000407505" description="Vacuolar protein sorting/targeting protein 10">
    <location>
        <begin position="24"/>
        <end position="1488"/>
    </location>
</feature>
<feature type="topological domain" description="Lumenal" evidence="2">
    <location>
        <begin position="24"/>
        <end position="1351"/>
    </location>
</feature>
<feature type="transmembrane region" description="Helical" evidence="2">
    <location>
        <begin position="1352"/>
        <end position="1372"/>
    </location>
</feature>
<feature type="topological domain" description="Cytoplasmic" evidence="2">
    <location>
        <begin position="1373"/>
        <end position="1405"/>
    </location>
</feature>
<feature type="transmembrane region" description="Helical" evidence="2">
    <location>
        <begin position="1406"/>
        <end position="1426"/>
    </location>
</feature>
<feature type="topological domain" description="Lumenal" evidence="2">
    <location>
        <begin position="1427"/>
        <end position="1488"/>
    </location>
</feature>
<feature type="repeat" description="BNR 1">
    <location>
        <begin position="63"/>
        <end position="72"/>
    </location>
</feature>
<feature type="repeat" description="BNR 2">
    <location>
        <begin position="380"/>
        <end position="389"/>
    </location>
</feature>
<feature type="repeat" description="BNR 3">
    <location>
        <begin position="440"/>
        <end position="450"/>
    </location>
</feature>
<feature type="repeat" description="BNR 4">
    <location>
        <begin position="482"/>
        <end position="490"/>
    </location>
</feature>
<feature type="repeat" description="BNR 5">
    <location>
        <begin position="720"/>
        <end position="730"/>
    </location>
</feature>
<feature type="repeat" description="BNR 6">
    <location>
        <begin position="1102"/>
        <end position="1112"/>
    </location>
</feature>
<feature type="repeat" description="BNR 7">
    <location>
        <begin position="1144"/>
        <end position="1153"/>
    </location>
</feature>
<feature type="glycosylation site" description="N-linked (GlcNAc...) asparagine" evidence="2">
    <location>
        <position position="301"/>
    </location>
</feature>
<feature type="glycosylation site" description="N-linked (GlcNAc...) asparagine" evidence="2">
    <location>
        <position position="325"/>
    </location>
</feature>
<feature type="glycosylation site" description="N-linked (GlcNAc...) asparagine" evidence="2">
    <location>
        <position position="481"/>
    </location>
</feature>
<feature type="glycosylation site" description="N-linked (GlcNAc...) asparagine" evidence="2">
    <location>
        <position position="845"/>
    </location>
</feature>
<feature type="glycosylation site" description="N-linked (GlcNAc...) asparagine" evidence="2">
    <location>
        <position position="967"/>
    </location>
</feature>
<feature type="glycosylation site" description="N-linked (GlcNAc...) asparagine" evidence="2">
    <location>
        <position position="1266"/>
    </location>
</feature>
<accession>B8NX76</accession>